<gene>
    <name type="primary">GALNT9</name>
</gene>
<organism>
    <name type="scientific">Homo sapiens</name>
    <name type="common">Human</name>
    <dbReference type="NCBI Taxonomy" id="9606"/>
    <lineage>
        <taxon>Eukaryota</taxon>
        <taxon>Metazoa</taxon>
        <taxon>Chordata</taxon>
        <taxon>Craniata</taxon>
        <taxon>Vertebrata</taxon>
        <taxon>Euteleostomi</taxon>
        <taxon>Mammalia</taxon>
        <taxon>Eutheria</taxon>
        <taxon>Euarchontoglires</taxon>
        <taxon>Primates</taxon>
        <taxon>Haplorrhini</taxon>
        <taxon>Catarrhini</taxon>
        <taxon>Hominidae</taxon>
        <taxon>Homo</taxon>
    </lineage>
</organism>
<protein>
    <recommendedName>
        <fullName>Polypeptide N-acetylgalactosaminyltransferase 9</fullName>
        <ecNumber evidence="5">2.4.1.41</ecNumber>
    </recommendedName>
    <alternativeName>
        <fullName>Polypeptide GalNAc transferase 9</fullName>
        <shortName>GalNAc-T9</shortName>
        <shortName>pp-GaNTase 9</shortName>
    </alternativeName>
    <alternativeName>
        <fullName>Protein-UDP acetylgalactosaminyltransferase 9</fullName>
    </alternativeName>
    <alternativeName>
        <fullName>UDP-GalNAc:polypeptide N-acetylgalactosaminyltransferase 9</fullName>
    </alternativeName>
</protein>
<name>GALT9_HUMAN</name>
<keyword id="KW-0025">Alternative splicing</keyword>
<keyword id="KW-1015">Disulfide bond</keyword>
<keyword id="KW-0325">Glycoprotein</keyword>
<keyword id="KW-0328">Glycosyltransferase</keyword>
<keyword id="KW-0333">Golgi apparatus</keyword>
<keyword id="KW-0430">Lectin</keyword>
<keyword id="KW-0464">Manganese</keyword>
<keyword id="KW-0472">Membrane</keyword>
<keyword id="KW-0479">Metal-binding</keyword>
<keyword id="KW-1267">Proteomics identification</keyword>
<keyword id="KW-1185">Reference proteome</keyword>
<keyword id="KW-0735">Signal-anchor</keyword>
<keyword id="KW-0808">Transferase</keyword>
<keyword id="KW-0812">Transmembrane</keyword>
<keyword id="KW-1133">Transmembrane helix</keyword>
<reference key="1">
    <citation type="journal article" date="2000" name="Biochim. Biophys. Acta">
        <title>Brain-specific expression of a novel human UDP-GalNAc:polypeptide N-acetylgalactosaminyltransferase (GalNAc-T9).</title>
        <authorList>
            <person name="Toba S."/>
            <person name="Tenno M."/>
            <person name="Konishi M."/>
            <person name="Mikami T."/>
            <person name="Itoh N."/>
            <person name="Kurosaka A."/>
        </authorList>
    </citation>
    <scope>NUCLEOTIDE SEQUENCE [MRNA] (ISOFORM 1)</scope>
    <scope>FUNCTION</scope>
    <scope>TISSUE SPECIFICITY</scope>
    <source>
        <tissue>Brain</tissue>
    </source>
</reference>
<reference key="2">
    <citation type="submission" date="2001-12" db="EMBL/GenBank/DDBJ databases">
        <authorList>
            <person name="Guo J.H."/>
            <person name="Zan Q."/>
            <person name="Yu L."/>
        </authorList>
    </citation>
    <scope>NUCLEOTIDE SEQUENCE [LARGE SCALE MRNA] (ISOFORM 2)</scope>
    <source>
        <tissue>Kidney</tissue>
    </source>
</reference>
<reference key="3">
    <citation type="journal article" date="2004" name="Genome Res.">
        <title>The status, quality, and expansion of the NIH full-length cDNA project: the Mammalian Gene Collection (MGC).</title>
        <authorList>
            <consortium name="The MGC Project Team"/>
        </authorList>
    </citation>
    <scope>NUCLEOTIDE SEQUENCE [LARGE SCALE MRNA] (ISOFORM 2)</scope>
    <source>
        <tissue>Colon</tissue>
    </source>
</reference>
<reference key="4">
    <citation type="journal article" date="2003" name="J. Biol. Chem.">
        <title>Cloning and characterization of a new human UDP-N-acetyl-alpha-D-galactosamine:polypeptide N-acetylgalactosaminyltransferase, designated pp-GalNAc-T13, that is specifically expressed in neurons and synthesizes GalNAc alpha-serine/threonine antigen.</title>
        <authorList>
            <person name="Zhang Y."/>
            <person name="Iwasaki H."/>
            <person name="Wang H."/>
            <person name="Kudo T."/>
            <person name="Kalka T.B."/>
            <person name="Hennet T."/>
            <person name="Kubota T."/>
            <person name="Cheng L."/>
            <person name="Inaba N."/>
            <person name="Gotoh M."/>
            <person name="Togayachi A."/>
            <person name="Guo J.-M."/>
            <person name="Hisatomi H."/>
            <person name="Nakajima K."/>
            <person name="Nishihara S."/>
            <person name="Nakamura M."/>
            <person name="Marth J.D."/>
            <person name="Narimatsu H."/>
        </authorList>
    </citation>
    <scope>FUNCTION</scope>
    <scope>CATALYTIC ACTIVITY</scope>
    <scope>PATHWAY</scope>
</reference>
<dbReference type="EC" id="2.4.1.41" evidence="5"/>
<dbReference type="EMBL" id="AB040672">
    <property type="protein sequence ID" value="BAB13699.2"/>
    <property type="molecule type" value="mRNA"/>
</dbReference>
<dbReference type="EMBL" id="AF458594">
    <property type="protein sequence ID" value="AAM49722.1"/>
    <property type="molecule type" value="mRNA"/>
</dbReference>
<dbReference type="EMBL" id="BC093817">
    <property type="protein sequence ID" value="AAH93817.2"/>
    <property type="molecule type" value="mRNA"/>
</dbReference>
<dbReference type="EMBL" id="BC093819">
    <property type="protein sequence ID" value="AAH93819.2"/>
    <property type="molecule type" value="mRNA"/>
</dbReference>
<dbReference type="CCDS" id="CCDS41866.1">
    <molecule id="Q9HCQ5-2"/>
</dbReference>
<dbReference type="CCDS" id="CCDS81755.1">
    <molecule id="Q9HCQ5-1"/>
</dbReference>
<dbReference type="RefSeq" id="NP_001116108.1">
    <property type="nucleotide sequence ID" value="NM_001122636.1"/>
</dbReference>
<dbReference type="RefSeq" id="NP_068580.2">
    <molecule id="Q9HCQ5-2"/>
    <property type="nucleotide sequence ID" value="NM_021808.3"/>
</dbReference>
<dbReference type="SMR" id="Q9HCQ5"/>
<dbReference type="BioGRID" id="119094">
    <property type="interactions" value="53"/>
</dbReference>
<dbReference type="FunCoup" id="Q9HCQ5">
    <property type="interactions" value="288"/>
</dbReference>
<dbReference type="IntAct" id="Q9HCQ5">
    <property type="interactions" value="44"/>
</dbReference>
<dbReference type="STRING" id="9606.ENSP00000329846"/>
<dbReference type="CAZy" id="CBM13">
    <property type="family name" value="Carbohydrate-Binding Module Family 13"/>
</dbReference>
<dbReference type="CAZy" id="GT27">
    <property type="family name" value="Glycosyltransferase Family 27"/>
</dbReference>
<dbReference type="GlyCosmos" id="Q9HCQ5">
    <property type="glycosylation" value="1 site, No reported glycans"/>
</dbReference>
<dbReference type="GlyGen" id="Q9HCQ5">
    <property type="glycosylation" value="2 sites"/>
</dbReference>
<dbReference type="iPTMnet" id="Q9HCQ5"/>
<dbReference type="PhosphoSitePlus" id="Q9HCQ5"/>
<dbReference type="BioMuta" id="GALNT9"/>
<dbReference type="DMDM" id="143811393"/>
<dbReference type="MassIVE" id="Q9HCQ5"/>
<dbReference type="PaxDb" id="9606-ENSP00000380488"/>
<dbReference type="PeptideAtlas" id="Q9HCQ5"/>
<dbReference type="ProteomicsDB" id="81785">
    <molecule id="Q9HCQ5-1"/>
</dbReference>
<dbReference type="ProteomicsDB" id="81786">
    <molecule id="Q9HCQ5-2"/>
</dbReference>
<dbReference type="Antibodypedia" id="32061">
    <property type="antibodies" value="138 antibodies from 21 providers"/>
</dbReference>
<dbReference type="DNASU" id="50614"/>
<dbReference type="Ensembl" id="ENST00000397325.6">
    <molecule id="Q9HCQ5-2"/>
    <property type="protein sequence ID" value="ENSP00000380488.2"/>
    <property type="gene ID" value="ENSG00000182870.13"/>
</dbReference>
<dbReference type="Ensembl" id="ENST00000541995.5">
    <molecule id="Q9HCQ5-2"/>
    <property type="protein sequence ID" value="ENSP00000440544.1"/>
    <property type="gene ID" value="ENSG00000182870.13"/>
</dbReference>
<dbReference type="Ensembl" id="ENST00000671997.1">
    <molecule id="Q9HCQ5-2"/>
    <property type="protein sequence ID" value="ENSP00000500654.1"/>
    <property type="gene ID" value="ENSG00000288490.1"/>
</dbReference>
<dbReference type="Ensembl" id="ENST00000673376.1">
    <molecule id="Q9HCQ5-2"/>
    <property type="protein sequence ID" value="ENSP00000500593.1"/>
    <property type="gene ID" value="ENSG00000288490.1"/>
</dbReference>
<dbReference type="GeneID" id="50614"/>
<dbReference type="KEGG" id="hsa:50614"/>
<dbReference type="UCSC" id="uc001uka.3">
    <molecule id="Q9HCQ5-1"/>
    <property type="organism name" value="human"/>
</dbReference>
<dbReference type="AGR" id="HGNC:4131"/>
<dbReference type="CTD" id="50614"/>
<dbReference type="DisGeNET" id="50614"/>
<dbReference type="GeneCards" id="GALNT9"/>
<dbReference type="HGNC" id="HGNC:4131">
    <property type="gene designation" value="GALNT9"/>
</dbReference>
<dbReference type="HPA" id="ENSG00000182870">
    <property type="expression patterns" value="Tissue enriched (brain)"/>
</dbReference>
<dbReference type="MalaCards" id="GALNT9"/>
<dbReference type="MIM" id="606251">
    <property type="type" value="gene"/>
</dbReference>
<dbReference type="neXtProt" id="NX_Q9HCQ5"/>
<dbReference type="OpenTargets" id="ENSG00000182870"/>
<dbReference type="PharmGKB" id="PA28544"/>
<dbReference type="VEuPathDB" id="HostDB:ENSG00000182870"/>
<dbReference type="eggNOG" id="KOG3736">
    <property type="taxonomic scope" value="Eukaryota"/>
</dbReference>
<dbReference type="GeneTree" id="ENSGT00940000156599"/>
<dbReference type="HOGENOM" id="CLU_013477_2_2_1"/>
<dbReference type="InParanoid" id="Q9HCQ5"/>
<dbReference type="OMA" id="QYVHRRY"/>
<dbReference type="OrthoDB" id="9924649at2759"/>
<dbReference type="PAN-GO" id="Q9HCQ5">
    <property type="GO annotations" value="3 GO annotations based on evolutionary models"/>
</dbReference>
<dbReference type="PhylomeDB" id="Q9HCQ5"/>
<dbReference type="TreeFam" id="TF313267"/>
<dbReference type="BRENDA" id="2.4.1.41">
    <property type="organism ID" value="2681"/>
</dbReference>
<dbReference type="PathwayCommons" id="Q9HCQ5"/>
<dbReference type="Reactome" id="R-HSA-913709">
    <property type="pathway name" value="O-linked glycosylation of mucins"/>
</dbReference>
<dbReference type="SignaLink" id="Q9HCQ5"/>
<dbReference type="UniPathway" id="UPA00378"/>
<dbReference type="BioGRID-ORCS" id="50614">
    <property type="hits" value="16 hits in 1139 CRISPR screens"/>
</dbReference>
<dbReference type="ChiTaRS" id="GALNT9">
    <property type="organism name" value="human"/>
</dbReference>
<dbReference type="GenomeRNAi" id="50614"/>
<dbReference type="Pharos" id="Q9HCQ5">
    <property type="development level" value="Tbio"/>
</dbReference>
<dbReference type="PRO" id="PR:Q9HCQ5"/>
<dbReference type="Proteomes" id="UP000005640">
    <property type="component" value="Chromosome 12"/>
</dbReference>
<dbReference type="RNAct" id="Q9HCQ5">
    <property type="molecule type" value="protein"/>
</dbReference>
<dbReference type="Bgee" id="ENSG00000182870">
    <property type="expression patterns" value="Expressed in right hemisphere of cerebellum and 88 other cell types or tissues"/>
</dbReference>
<dbReference type="ExpressionAtlas" id="Q9HCQ5">
    <property type="expression patterns" value="baseline and differential"/>
</dbReference>
<dbReference type="GO" id="GO:0005794">
    <property type="term" value="C:Golgi apparatus"/>
    <property type="evidence" value="ECO:0000318"/>
    <property type="project" value="GO_Central"/>
</dbReference>
<dbReference type="GO" id="GO:0000139">
    <property type="term" value="C:Golgi membrane"/>
    <property type="evidence" value="ECO:0000304"/>
    <property type="project" value="Reactome"/>
</dbReference>
<dbReference type="GO" id="GO:0030246">
    <property type="term" value="F:carbohydrate binding"/>
    <property type="evidence" value="ECO:0007669"/>
    <property type="project" value="UniProtKB-KW"/>
</dbReference>
<dbReference type="GO" id="GO:0046872">
    <property type="term" value="F:metal ion binding"/>
    <property type="evidence" value="ECO:0007669"/>
    <property type="project" value="UniProtKB-KW"/>
</dbReference>
<dbReference type="GO" id="GO:0004653">
    <property type="term" value="F:polypeptide N-acetylgalactosaminyltransferase activity"/>
    <property type="evidence" value="ECO:0000318"/>
    <property type="project" value="GO_Central"/>
</dbReference>
<dbReference type="GO" id="GO:0016266">
    <property type="term" value="P:O-glycan processing"/>
    <property type="evidence" value="ECO:0000304"/>
    <property type="project" value="Reactome"/>
</dbReference>
<dbReference type="GO" id="GO:0006493">
    <property type="term" value="P:protein O-linked glycosylation"/>
    <property type="evidence" value="ECO:0000318"/>
    <property type="project" value="GO_Central"/>
</dbReference>
<dbReference type="CDD" id="cd23473">
    <property type="entry name" value="beta-trefoil_Ricin_GALNT9"/>
    <property type="match status" value="1"/>
</dbReference>
<dbReference type="CDD" id="cd02510">
    <property type="entry name" value="pp-GalNAc-T"/>
    <property type="match status" value="1"/>
</dbReference>
<dbReference type="FunFam" id="2.80.10.50:FF:000025">
    <property type="entry name" value="Polypeptide N-acetylgalactosaminyltransferase"/>
    <property type="match status" value="1"/>
</dbReference>
<dbReference type="FunFam" id="3.90.550.10:FF:000192">
    <property type="entry name" value="Polypeptide N-acetylgalactosaminyltransferase 9"/>
    <property type="match status" value="1"/>
</dbReference>
<dbReference type="FunFam" id="3.90.550.10:FF:000203">
    <property type="entry name" value="Polypeptide N-acetylgalactosaminyltransferase 9"/>
    <property type="match status" value="1"/>
</dbReference>
<dbReference type="Gene3D" id="2.80.10.50">
    <property type="match status" value="1"/>
</dbReference>
<dbReference type="Gene3D" id="3.90.550.10">
    <property type="entry name" value="Spore Coat Polysaccharide Biosynthesis Protein SpsA, Chain A"/>
    <property type="match status" value="1"/>
</dbReference>
<dbReference type="InterPro" id="IPR045885">
    <property type="entry name" value="GalNAc-T"/>
</dbReference>
<dbReference type="InterPro" id="IPR001173">
    <property type="entry name" value="Glyco_trans_2-like"/>
</dbReference>
<dbReference type="InterPro" id="IPR029044">
    <property type="entry name" value="Nucleotide-diphossugar_trans"/>
</dbReference>
<dbReference type="InterPro" id="IPR035992">
    <property type="entry name" value="Ricin_B-like_lectins"/>
</dbReference>
<dbReference type="InterPro" id="IPR000772">
    <property type="entry name" value="Ricin_B_lectin"/>
</dbReference>
<dbReference type="PANTHER" id="PTHR11675">
    <property type="entry name" value="N-ACETYLGALACTOSAMINYLTRANSFERASE"/>
    <property type="match status" value="1"/>
</dbReference>
<dbReference type="PANTHER" id="PTHR11675:SF28">
    <property type="entry name" value="POLYPEPTIDE N-ACETYLGALACTOSAMINYLTRANSFERASE 9"/>
    <property type="match status" value="1"/>
</dbReference>
<dbReference type="Pfam" id="PF00535">
    <property type="entry name" value="Glycos_transf_2"/>
    <property type="match status" value="1"/>
</dbReference>
<dbReference type="Pfam" id="PF00652">
    <property type="entry name" value="Ricin_B_lectin"/>
    <property type="match status" value="1"/>
</dbReference>
<dbReference type="SMART" id="SM00458">
    <property type="entry name" value="RICIN"/>
    <property type="match status" value="1"/>
</dbReference>
<dbReference type="SUPFAM" id="SSF53448">
    <property type="entry name" value="Nucleotide-diphospho-sugar transferases"/>
    <property type="match status" value="1"/>
</dbReference>
<dbReference type="SUPFAM" id="SSF50370">
    <property type="entry name" value="Ricin B-like lectins"/>
    <property type="match status" value="1"/>
</dbReference>
<dbReference type="PROSITE" id="PS50231">
    <property type="entry name" value="RICIN_B_LECTIN"/>
    <property type="match status" value="1"/>
</dbReference>
<proteinExistence type="evidence at protein level"/>
<evidence type="ECO:0000250" key="1"/>
<evidence type="ECO:0000255" key="2"/>
<evidence type="ECO:0000255" key="3">
    <source>
        <dbReference type="PROSITE-ProRule" id="PRU00174"/>
    </source>
</evidence>
<evidence type="ECO:0000269" key="4">
    <source>
    </source>
</evidence>
<evidence type="ECO:0000269" key="5">
    <source>
    </source>
</evidence>
<evidence type="ECO:0000303" key="6">
    <source>
    </source>
</evidence>
<evidence type="ECO:0000303" key="7">
    <source ref="2"/>
</evidence>
<evidence type="ECO:0000305" key="8"/>
<accession>Q9HCQ5</accession>
<accession>Q52LR8</accession>
<accession>Q6NT54</accession>
<accession>Q8NFR1</accession>
<comment type="function">
    <text evidence="4 5">Catalyzes the initial reaction in O-linked oligosaccharide biosynthesis, the transfer of an N-acetyl-D-galactosamine residue to a serine or threonine residue on the protein receptor. Does not glycosylate apomucin or SDC3.</text>
</comment>
<comment type="catalytic activity">
    <reaction evidence="5">
        <text>L-seryl-[protein] + UDP-N-acetyl-alpha-D-galactosamine = a 3-O-[N-acetyl-alpha-D-galactosaminyl]-L-seryl-[protein] + UDP + H(+)</text>
        <dbReference type="Rhea" id="RHEA:23956"/>
        <dbReference type="Rhea" id="RHEA-COMP:9863"/>
        <dbReference type="Rhea" id="RHEA-COMP:12788"/>
        <dbReference type="ChEBI" id="CHEBI:15378"/>
        <dbReference type="ChEBI" id="CHEBI:29999"/>
        <dbReference type="ChEBI" id="CHEBI:53604"/>
        <dbReference type="ChEBI" id="CHEBI:58223"/>
        <dbReference type="ChEBI" id="CHEBI:67138"/>
        <dbReference type="EC" id="2.4.1.41"/>
    </reaction>
</comment>
<comment type="catalytic activity">
    <reaction evidence="5">
        <text>L-threonyl-[protein] + UDP-N-acetyl-alpha-D-galactosamine = a 3-O-[N-acetyl-alpha-D-galactosaminyl]-L-threonyl-[protein] + UDP + H(+)</text>
        <dbReference type="Rhea" id="RHEA:52424"/>
        <dbReference type="Rhea" id="RHEA-COMP:11060"/>
        <dbReference type="Rhea" id="RHEA-COMP:11689"/>
        <dbReference type="ChEBI" id="CHEBI:15378"/>
        <dbReference type="ChEBI" id="CHEBI:30013"/>
        <dbReference type="ChEBI" id="CHEBI:58223"/>
        <dbReference type="ChEBI" id="CHEBI:67138"/>
        <dbReference type="ChEBI" id="CHEBI:87075"/>
        <dbReference type="EC" id="2.4.1.41"/>
    </reaction>
</comment>
<comment type="cofactor">
    <cofactor evidence="1">
        <name>Mn(2+)</name>
        <dbReference type="ChEBI" id="CHEBI:29035"/>
    </cofactor>
</comment>
<comment type="pathway">
    <text evidence="5">Protein modification; protein glycosylation.</text>
</comment>
<comment type="subcellular location">
    <subcellularLocation>
        <location evidence="1">Golgi apparatus membrane</location>
        <topology evidence="1">Single-pass type II membrane protein</topology>
    </subcellularLocation>
</comment>
<comment type="alternative products">
    <event type="alternative splicing"/>
    <isoform>
        <id>Q9HCQ5-1</id>
        <name>1</name>
        <sequence type="displayed"/>
    </isoform>
    <isoform>
        <id>Q9HCQ5-2</id>
        <name>2</name>
        <sequence type="described" ref="VSP_011206"/>
    </isoform>
</comment>
<comment type="tissue specificity">
    <text evidence="4">Specifically expressed in brain. Not expressed in heart, placenta, lung, liver, skeletal muscle, kidney, pancreas, spleen, thymus, prostate, testis, ovary, small intestine, colon and leukocyte. In brain, it is expressed in cerebellum, frontal lobe, temporal lobe, putamen and spinal cord, weakly expressed in cerebral cortex. Not expressed in medulla and occipital pole.</text>
</comment>
<comment type="domain">
    <text evidence="1">There are two conserved domains in the glycosyltransferase region: the N-terminal domain (domain A, also called GT1 motif), which is probably involved in manganese coordination and substrate binding and the C-terminal domain (domain B, also called Gal/GalNAc-T motif), which is probably involved in catalytic reaction and UDP-Gal binding.</text>
</comment>
<comment type="domain">
    <text evidence="1">The ricin B-type lectin domain binds to GalNAc and contributes to the glycopeptide specificity.</text>
</comment>
<comment type="similarity">
    <text evidence="8">Belongs to the glycosyltransferase 2 family. GalNAc-T subfamily.</text>
</comment>
<comment type="online information" name="Functional Glycomics Gateway - GTase">
    <link uri="http://www.functionalglycomics.org/glycomics/molecule/jsp/glycoEnzyme/viewGlycoEnzyme.jsp?gbpId=gt_hum_491"/>
    <text>Polypeptide N-acetylgalactosaminyltransferase 9</text>
</comment>
<sequence length="603" mass="68359">MAVARKIRTLLTVNILVFVGIVLFSVYCRLQGRSQELVRIVSGDRRVRSRHAKVGTLGDREAILQRLDHLEEVVYNQLNGLAKPIGLVEGPGGLGQGGLAATLRDDGQEAEGKYEEYGYNAQLSDRISLDRSIPDYRPRKCRQMSYAQDLPQVSVVFIFVNEALSVILRSVHSVVNHTPSQLLKEVILVDDNSDNVELKFNLDQYVNKRYPGLVKIVRNSRREGLIRARLQGWKAATAPVVGFFDAHVEFNTGWAEPALSRIREDRRRIVLPAIDNIKYSTFEVQQYANAAHGYNWGLRCMYIIPPQDWLDRGDESAPIRTPAMIGCSFVVDREYFGDIGLLDPGMEVYGGENVELGMRVWQCGGSMEVLPCSRVAHIERTRKPYNNDIDYYAKRNALRAAEVWMDDFKSHVYMAWNIPMSNPGVDFGDVSERLALRQRLKCRSFKWYLENVYPEMRVYNNTLTYGEVRNSKASAYCLDQGAEDGDRAILYPCHGMSSQLVRYSADGLLQLGPLGSTAFLPDSKCLVDDGTGRMPTLKKCEDVARPTQRLWDFTQSGPIVSRATGRCLEVEMSKDANFGLRLVVQRCSGQKWMIRNWIKHARH</sequence>
<feature type="chain" id="PRO_0000059120" description="Polypeptide N-acetylgalactosaminyltransferase 9">
    <location>
        <begin position="1"/>
        <end position="603"/>
    </location>
</feature>
<feature type="topological domain" description="Cytoplasmic" evidence="2">
    <location>
        <begin position="1"/>
        <end position="6"/>
    </location>
</feature>
<feature type="transmembrane region" description="Helical; Signal-anchor for type II membrane protein" evidence="2">
    <location>
        <begin position="7"/>
        <end position="29"/>
    </location>
</feature>
<feature type="topological domain" description="Lumenal" evidence="2">
    <location>
        <begin position="30"/>
        <end position="603"/>
    </location>
</feature>
<feature type="domain" description="Ricin B-type lectin" evidence="3">
    <location>
        <begin position="464"/>
        <end position="600"/>
    </location>
</feature>
<feature type="region of interest" description="Catalytic subdomain A">
    <location>
        <begin position="150"/>
        <end position="261"/>
    </location>
</feature>
<feature type="region of interest" description="Catalytic subdomain B">
    <location>
        <begin position="318"/>
        <end position="380"/>
    </location>
</feature>
<feature type="binding site" evidence="1">
    <location>
        <position position="191"/>
    </location>
    <ligand>
        <name>substrate</name>
    </ligand>
</feature>
<feature type="binding site" evidence="1">
    <location>
        <position position="222"/>
    </location>
    <ligand>
        <name>substrate</name>
    </ligand>
</feature>
<feature type="binding site" evidence="1">
    <location>
        <position position="245"/>
    </location>
    <ligand>
        <name>Mn(2+)</name>
        <dbReference type="ChEBI" id="CHEBI:29035"/>
    </ligand>
</feature>
<feature type="binding site" evidence="1">
    <location>
        <position position="247"/>
    </location>
    <ligand>
        <name>Mn(2+)</name>
        <dbReference type="ChEBI" id="CHEBI:29035"/>
    </ligand>
</feature>
<feature type="binding site" evidence="1">
    <location>
        <position position="377"/>
    </location>
    <ligand>
        <name>Mn(2+)</name>
        <dbReference type="ChEBI" id="CHEBI:29035"/>
    </ligand>
</feature>
<feature type="binding site" evidence="1">
    <location>
        <position position="380"/>
    </location>
    <ligand>
        <name>substrate</name>
    </ligand>
</feature>
<feature type="binding site" evidence="1">
    <location>
        <position position="385"/>
    </location>
    <ligand>
        <name>substrate</name>
    </ligand>
</feature>
<feature type="glycosylation site" description="N-linked (GlcNAc...) asparagine" evidence="2">
    <location>
        <position position="460"/>
    </location>
</feature>
<feature type="disulfide bond" evidence="3">
    <location>
        <begin position="141"/>
        <end position="372"/>
    </location>
</feature>
<feature type="disulfide bond" evidence="3">
    <location>
        <begin position="363"/>
        <end position="442"/>
    </location>
</feature>
<feature type="disulfide bond" evidence="3">
    <location>
        <begin position="477"/>
        <end position="493"/>
    </location>
</feature>
<feature type="disulfide bond" evidence="3">
    <location>
        <begin position="525"/>
        <end position="540"/>
    </location>
</feature>
<feature type="disulfide bond" evidence="3">
    <location>
        <begin position="567"/>
        <end position="587"/>
    </location>
</feature>
<feature type="splice variant" id="VSP_011206" description="In isoform 2." evidence="6 7">
    <location>
        <begin position="1"/>
        <end position="366"/>
    </location>
</feature>
<feature type="sequence conflict" description="In Ref. 1; BAB13699." evidence="8" ref="1">
    <original>K</original>
    <variation>R</variation>
    <location>
        <position position="539"/>
    </location>
</feature>